<comment type="function">
    <text evidence="1">May play a role in DNA repair. It seems to be involved in an RecBC-independent recombinational process of DNA repair. It may act with RecF and RecO.</text>
</comment>
<comment type="similarity">
    <text evidence="1">Belongs to the RecR family.</text>
</comment>
<protein>
    <recommendedName>
        <fullName evidence="1">Recombination protein RecR</fullName>
    </recommendedName>
</protein>
<feature type="chain" id="PRO_0000190323" description="Recombination protein RecR">
    <location>
        <begin position="1"/>
        <end position="198"/>
    </location>
</feature>
<feature type="domain" description="Toprim" evidence="1">
    <location>
        <begin position="80"/>
        <end position="175"/>
    </location>
</feature>
<feature type="zinc finger region" description="C4-type" evidence="1">
    <location>
        <begin position="57"/>
        <end position="72"/>
    </location>
</feature>
<name>RECR_GEOKA</name>
<keyword id="KW-0227">DNA damage</keyword>
<keyword id="KW-0233">DNA recombination</keyword>
<keyword id="KW-0234">DNA repair</keyword>
<keyword id="KW-0479">Metal-binding</keyword>
<keyword id="KW-1185">Reference proteome</keyword>
<keyword id="KW-0862">Zinc</keyword>
<keyword id="KW-0863">Zinc-finger</keyword>
<dbReference type="EMBL" id="BA000043">
    <property type="protein sequence ID" value="BAD74304.1"/>
    <property type="molecule type" value="Genomic_DNA"/>
</dbReference>
<dbReference type="RefSeq" id="WP_011229535.1">
    <property type="nucleotide sequence ID" value="NC_006510.1"/>
</dbReference>
<dbReference type="SMR" id="Q5L3X4"/>
<dbReference type="STRING" id="235909.GK0019"/>
<dbReference type="GeneID" id="32065400"/>
<dbReference type="KEGG" id="gka:GK0019"/>
<dbReference type="eggNOG" id="COG0353">
    <property type="taxonomic scope" value="Bacteria"/>
</dbReference>
<dbReference type="HOGENOM" id="CLU_060739_1_0_9"/>
<dbReference type="Proteomes" id="UP000001172">
    <property type="component" value="Chromosome"/>
</dbReference>
<dbReference type="GO" id="GO:0003677">
    <property type="term" value="F:DNA binding"/>
    <property type="evidence" value="ECO:0007669"/>
    <property type="project" value="UniProtKB-UniRule"/>
</dbReference>
<dbReference type="GO" id="GO:0008270">
    <property type="term" value="F:zinc ion binding"/>
    <property type="evidence" value="ECO:0007669"/>
    <property type="project" value="UniProtKB-KW"/>
</dbReference>
<dbReference type="GO" id="GO:0006310">
    <property type="term" value="P:DNA recombination"/>
    <property type="evidence" value="ECO:0007669"/>
    <property type="project" value="UniProtKB-UniRule"/>
</dbReference>
<dbReference type="GO" id="GO:0006281">
    <property type="term" value="P:DNA repair"/>
    <property type="evidence" value="ECO:0007669"/>
    <property type="project" value="UniProtKB-UniRule"/>
</dbReference>
<dbReference type="CDD" id="cd01025">
    <property type="entry name" value="TOPRIM_recR"/>
    <property type="match status" value="1"/>
</dbReference>
<dbReference type="Gene3D" id="3.30.60.80">
    <property type="match status" value="1"/>
</dbReference>
<dbReference type="Gene3D" id="3.40.1360.10">
    <property type="match status" value="1"/>
</dbReference>
<dbReference type="Gene3D" id="6.10.250.240">
    <property type="match status" value="1"/>
</dbReference>
<dbReference type="Gene3D" id="1.10.8.420">
    <property type="entry name" value="RecR Domain 1"/>
    <property type="match status" value="1"/>
</dbReference>
<dbReference type="HAMAP" id="MF_00017">
    <property type="entry name" value="RecR"/>
    <property type="match status" value="1"/>
</dbReference>
<dbReference type="InterPro" id="IPR000093">
    <property type="entry name" value="DNA_Rcmb_RecR"/>
</dbReference>
<dbReference type="InterPro" id="IPR023627">
    <property type="entry name" value="Rcmb_RecR"/>
</dbReference>
<dbReference type="InterPro" id="IPR015967">
    <property type="entry name" value="Rcmb_RecR_Znf"/>
</dbReference>
<dbReference type="InterPro" id="IPR006171">
    <property type="entry name" value="TOPRIM_dom"/>
</dbReference>
<dbReference type="InterPro" id="IPR034137">
    <property type="entry name" value="TOPRIM_RecR"/>
</dbReference>
<dbReference type="NCBIfam" id="TIGR00615">
    <property type="entry name" value="recR"/>
    <property type="match status" value="1"/>
</dbReference>
<dbReference type="PANTHER" id="PTHR30446">
    <property type="entry name" value="RECOMBINATION PROTEIN RECR"/>
    <property type="match status" value="1"/>
</dbReference>
<dbReference type="PANTHER" id="PTHR30446:SF0">
    <property type="entry name" value="RECOMBINATION PROTEIN RECR"/>
    <property type="match status" value="1"/>
</dbReference>
<dbReference type="Pfam" id="PF21175">
    <property type="entry name" value="RecR_C"/>
    <property type="match status" value="1"/>
</dbReference>
<dbReference type="Pfam" id="PF21176">
    <property type="entry name" value="RecR_HhH"/>
    <property type="match status" value="1"/>
</dbReference>
<dbReference type="Pfam" id="PF02132">
    <property type="entry name" value="RecR_ZnF"/>
    <property type="match status" value="1"/>
</dbReference>
<dbReference type="Pfam" id="PF13662">
    <property type="entry name" value="Toprim_4"/>
    <property type="match status" value="1"/>
</dbReference>
<dbReference type="SMART" id="SM00493">
    <property type="entry name" value="TOPRIM"/>
    <property type="match status" value="1"/>
</dbReference>
<dbReference type="SUPFAM" id="SSF111304">
    <property type="entry name" value="Recombination protein RecR"/>
    <property type="match status" value="1"/>
</dbReference>
<dbReference type="PROSITE" id="PS01300">
    <property type="entry name" value="RECR"/>
    <property type="match status" value="1"/>
</dbReference>
<dbReference type="PROSITE" id="PS50880">
    <property type="entry name" value="TOPRIM"/>
    <property type="match status" value="1"/>
</dbReference>
<proteinExistence type="inferred from homology"/>
<gene>
    <name evidence="1" type="primary">recR</name>
    <name type="ordered locus">GK0019</name>
</gene>
<accession>Q5L3X4</accession>
<sequence>MHYPEPLSKLIDSFMKLPGIGPKTAARLAFHVLAMKEDTVLEFAKALVDVKRHIHYCTICGHITDTDPCYICKDERRDRTTICVVQDPKDVIAMERMKEYNGLYHVLHGAISPMEGIGPEDIKIAELLTRLQDETVQEVILATDPNIEGEATAMYISRLLKPTGIKVTRIAHGLPVGGDLEYADEVTLSKALEGRREL</sequence>
<evidence type="ECO:0000255" key="1">
    <source>
        <dbReference type="HAMAP-Rule" id="MF_00017"/>
    </source>
</evidence>
<organism>
    <name type="scientific">Geobacillus kaustophilus (strain HTA426)</name>
    <dbReference type="NCBI Taxonomy" id="235909"/>
    <lineage>
        <taxon>Bacteria</taxon>
        <taxon>Bacillati</taxon>
        <taxon>Bacillota</taxon>
        <taxon>Bacilli</taxon>
        <taxon>Bacillales</taxon>
        <taxon>Anoxybacillaceae</taxon>
        <taxon>Geobacillus</taxon>
        <taxon>Geobacillus thermoleovorans group</taxon>
    </lineage>
</organism>
<reference key="1">
    <citation type="journal article" date="2004" name="Nucleic Acids Res.">
        <title>Thermoadaptation trait revealed by the genome sequence of thermophilic Geobacillus kaustophilus.</title>
        <authorList>
            <person name="Takami H."/>
            <person name="Takaki Y."/>
            <person name="Chee G.-J."/>
            <person name="Nishi S."/>
            <person name="Shimamura S."/>
            <person name="Suzuki H."/>
            <person name="Matsui S."/>
            <person name="Uchiyama I."/>
        </authorList>
    </citation>
    <scope>NUCLEOTIDE SEQUENCE [LARGE SCALE GENOMIC DNA]</scope>
    <source>
        <strain>HTA426</strain>
    </source>
</reference>